<keyword id="KW-0997">Cell inner membrane</keyword>
<keyword id="KW-1003">Cell membrane</keyword>
<keyword id="KW-0472">Membrane</keyword>
<keyword id="KW-1185">Reference proteome</keyword>
<keyword id="KW-0812">Transmembrane</keyword>
<keyword id="KW-1133">Transmembrane helix</keyword>
<keyword id="KW-0813">Transport</keyword>
<reference key="1">
    <citation type="journal article" date="2001" name="Nature">
        <title>Genome sequence of enterohaemorrhagic Escherichia coli O157:H7.</title>
        <authorList>
            <person name="Perna N.T."/>
            <person name="Plunkett G. III"/>
            <person name="Burland V."/>
            <person name="Mau B."/>
            <person name="Glasner J.D."/>
            <person name="Rose D.J."/>
            <person name="Mayhew G.F."/>
            <person name="Evans P.S."/>
            <person name="Gregor J."/>
            <person name="Kirkpatrick H.A."/>
            <person name="Posfai G."/>
            <person name="Hackett J."/>
            <person name="Klink S."/>
            <person name="Boutin A."/>
            <person name="Shao Y."/>
            <person name="Miller L."/>
            <person name="Grotbeck E.J."/>
            <person name="Davis N.W."/>
            <person name="Lim A."/>
            <person name="Dimalanta E.T."/>
            <person name="Potamousis K."/>
            <person name="Apodaca J."/>
            <person name="Anantharaman T.S."/>
            <person name="Lin J."/>
            <person name="Yen G."/>
            <person name="Schwartz D.C."/>
            <person name="Welch R.A."/>
            <person name="Blattner F.R."/>
        </authorList>
    </citation>
    <scope>NUCLEOTIDE SEQUENCE [LARGE SCALE GENOMIC DNA]</scope>
    <source>
        <strain>O157:H7 / EDL933 / ATCC 700927 / EHEC</strain>
    </source>
</reference>
<reference key="2">
    <citation type="journal article" date="2001" name="DNA Res.">
        <title>Complete genome sequence of enterohemorrhagic Escherichia coli O157:H7 and genomic comparison with a laboratory strain K-12.</title>
        <authorList>
            <person name="Hayashi T."/>
            <person name="Makino K."/>
            <person name="Ohnishi M."/>
            <person name="Kurokawa K."/>
            <person name="Ishii K."/>
            <person name="Yokoyama K."/>
            <person name="Han C.-G."/>
            <person name="Ohtsubo E."/>
            <person name="Nakayama K."/>
            <person name="Murata T."/>
            <person name="Tanaka M."/>
            <person name="Tobe T."/>
            <person name="Iida T."/>
            <person name="Takami H."/>
            <person name="Honda T."/>
            <person name="Sasakawa C."/>
            <person name="Ogasawara N."/>
            <person name="Yasunaga T."/>
            <person name="Kuhara S."/>
            <person name="Shiba T."/>
            <person name="Hattori M."/>
            <person name="Shinagawa H."/>
        </authorList>
    </citation>
    <scope>NUCLEOTIDE SEQUENCE [LARGE SCALE GENOMIC DNA]</scope>
    <source>
        <strain>O157:H7 / Sakai / RIMD 0509952 / EHEC</strain>
    </source>
</reference>
<proteinExistence type="inferred from homology"/>
<feature type="chain" id="PRO_0000059970" description="Vitamin B12 import system permease protein BtuC">
    <location>
        <begin position="1"/>
        <end position="326"/>
    </location>
</feature>
<feature type="topological domain" description="Cytoplasmic" evidence="1">
    <location>
        <begin position="1"/>
        <end position="10"/>
    </location>
</feature>
<feature type="transmembrane region" description="Helical; Name=1" evidence="1">
    <location>
        <begin position="11"/>
        <end position="35"/>
    </location>
</feature>
<feature type="topological domain" description="Periplasmic" evidence="1">
    <location>
        <begin position="36"/>
        <end position="56"/>
    </location>
</feature>
<feature type="transmembrane region" description="Helical; Name=2" evidence="1">
    <location>
        <begin position="57"/>
        <end position="81"/>
    </location>
</feature>
<feature type="topological domain" description="Cytoplasmic" evidence="1">
    <location>
        <begin position="82"/>
        <end position="92"/>
    </location>
</feature>
<feature type="transmembrane region" description="Helical; Name=3" evidence="1">
    <location>
        <begin position="93"/>
        <end position="107"/>
    </location>
</feature>
<feature type="topological domain" description="Periplasmic" evidence="1">
    <location>
        <begin position="108"/>
        <end position="113"/>
    </location>
</feature>
<feature type="transmembrane region" description="Helical; Name=4" evidence="1">
    <location>
        <begin position="114"/>
        <end position="138"/>
    </location>
</feature>
<feature type="topological domain" description="Cytoplasmic" evidence="1">
    <location>
        <begin position="139"/>
        <end position="141"/>
    </location>
</feature>
<feature type="transmembrane region" description="Helical; Name=5" evidence="1">
    <location>
        <begin position="142"/>
        <end position="166"/>
    </location>
</feature>
<feature type="topological domain" description="Periplasmic" evidence="1">
    <location>
        <begin position="167"/>
        <end position="190"/>
    </location>
</feature>
<feature type="transmembrane region" description="Helical; Name=6" evidence="1">
    <location>
        <begin position="191"/>
        <end position="206"/>
    </location>
</feature>
<feature type="topological domain" description="Cytoplasmic" evidence="1">
    <location>
        <begin position="207"/>
        <end position="228"/>
    </location>
</feature>
<feature type="transmembrane region" description="Helical; Name=7" evidence="1">
    <location>
        <begin position="229"/>
        <end position="249"/>
    </location>
</feature>
<feature type="topological domain" description="Periplasmic" evidence="1">
    <location>
        <begin position="250"/>
        <end position="257"/>
    </location>
</feature>
<feature type="transmembrane region" description="Helical; Name=8" evidence="1">
    <location>
        <begin position="258"/>
        <end position="267"/>
    </location>
</feature>
<feature type="topological domain" description="Cytoplasmic" evidence="1">
    <location>
        <begin position="268"/>
        <end position="274"/>
    </location>
</feature>
<feature type="transmembrane region" description="Helical; Name=9" evidence="1">
    <location>
        <begin position="275"/>
        <end position="296"/>
    </location>
</feature>
<feature type="topological domain" description="Periplasmic" evidence="1">
    <location>
        <begin position="297"/>
        <end position="304"/>
    </location>
</feature>
<feature type="transmembrane region" description="Helical; Name=10" evidence="1">
    <location>
        <begin position="305"/>
        <end position="324"/>
    </location>
</feature>
<feature type="topological domain" description="Cytoplasmic" evidence="1">
    <location>
        <begin position="325"/>
        <end position="326"/>
    </location>
</feature>
<accession>Q8X4L7</accession>
<evidence type="ECO:0000250" key="1"/>
<evidence type="ECO:0000305" key="2"/>
<protein>
    <recommendedName>
        <fullName>Vitamin B12 import system permease protein BtuC</fullName>
    </recommendedName>
</protein>
<gene>
    <name type="primary">btuC</name>
    <name type="ordered locus">Z2740</name>
    <name type="ordered locus">ECs2418</name>
</gene>
<comment type="function">
    <text evidence="1">Part of the ABC transporter complex BtuCDF involved in vitamin B12 import. Involved in the translocation of the substrate across the membrane (By similarity).</text>
</comment>
<comment type="subunit">
    <text evidence="1">The complex is composed of two ATP-binding proteins (BtuD), two transmembrane proteins (BtuC) and a solute-binding protein (BtuF).</text>
</comment>
<comment type="subcellular location">
    <subcellularLocation>
        <location evidence="1">Cell inner membrane</location>
        <topology evidence="1">Multi-pass membrane protein</topology>
    </subcellularLocation>
</comment>
<comment type="similarity">
    <text evidence="2">Belongs to the binding-protein-dependent transport system permease family. FecCD subfamily.</text>
</comment>
<sequence>MLTLARQQQRQNIRWLLCLSVLMLLALLLSLCAGEQWISPGDWFSPRGELFVWQIRLPRTLAVLLVGAALAISGAVMQALFENPLAEPGLLGVSNGAGVGLIAAVLLGQGQLPNWALGLCAIAGALIITLILLRFARRHLSTSRLLLAGVALGIICSALMTWAIYFSTSVDLRQLMYWMMGGFGGVDWRQSWLMLALIPMLLWICCQSRPMNMLALGEISARQLGLPLWFWRNVLVAATGWMVGVSVALAGAIGFIGLVIPHILRLCGLTDHRALLPGCALAGASALLLADIVARLALAAAELPIGVVTATLGAPVFIWLLLKAGR</sequence>
<name>BTUC_ECO57</name>
<dbReference type="EMBL" id="AE005174">
    <property type="protein sequence ID" value="AAG56698.1"/>
    <property type="molecule type" value="Genomic_DNA"/>
</dbReference>
<dbReference type="EMBL" id="BA000007">
    <property type="protein sequence ID" value="BAB35841.1"/>
    <property type="molecule type" value="Genomic_DNA"/>
</dbReference>
<dbReference type="PIR" id="B90931">
    <property type="entry name" value="B90931"/>
</dbReference>
<dbReference type="PIR" id="F85779">
    <property type="entry name" value="F85779"/>
</dbReference>
<dbReference type="RefSeq" id="NP_310445.1">
    <property type="nucleotide sequence ID" value="NC_002695.1"/>
</dbReference>
<dbReference type="RefSeq" id="WP_000956513.1">
    <property type="nucleotide sequence ID" value="NZ_VOAI01000007.1"/>
</dbReference>
<dbReference type="SMR" id="Q8X4L7"/>
<dbReference type="STRING" id="155864.Z2740"/>
<dbReference type="GeneID" id="912333"/>
<dbReference type="KEGG" id="ece:Z2740"/>
<dbReference type="KEGG" id="ecs:ECs_2418"/>
<dbReference type="PATRIC" id="fig|386585.9.peg.2532"/>
<dbReference type="eggNOG" id="COG4139">
    <property type="taxonomic scope" value="Bacteria"/>
</dbReference>
<dbReference type="HOGENOM" id="CLU_013016_0_3_6"/>
<dbReference type="OMA" id="SVAMRGW"/>
<dbReference type="Proteomes" id="UP000000558">
    <property type="component" value="Chromosome"/>
</dbReference>
<dbReference type="Proteomes" id="UP000002519">
    <property type="component" value="Chromosome"/>
</dbReference>
<dbReference type="GO" id="GO:0005886">
    <property type="term" value="C:plasma membrane"/>
    <property type="evidence" value="ECO:0007669"/>
    <property type="project" value="UniProtKB-SubCell"/>
</dbReference>
<dbReference type="GO" id="GO:0090482">
    <property type="term" value="F:vitamin transmembrane transporter activity"/>
    <property type="evidence" value="ECO:0007669"/>
    <property type="project" value="UniProtKB-UniRule"/>
</dbReference>
<dbReference type="GO" id="GO:0015889">
    <property type="term" value="P:cobalamin transport"/>
    <property type="evidence" value="ECO:0007669"/>
    <property type="project" value="UniProtKB-UniRule"/>
</dbReference>
<dbReference type="CDD" id="cd06550">
    <property type="entry name" value="TM_ABC_iron-siderophores_like"/>
    <property type="match status" value="1"/>
</dbReference>
<dbReference type="FunFam" id="1.10.3470.10:FF:000001">
    <property type="entry name" value="Vitamin B12 ABC transporter permease BtuC"/>
    <property type="match status" value="1"/>
</dbReference>
<dbReference type="Gene3D" id="1.10.3470.10">
    <property type="entry name" value="ABC transporter involved in vitamin B12 uptake, BtuC"/>
    <property type="match status" value="1"/>
</dbReference>
<dbReference type="HAMAP" id="MF_01004">
    <property type="entry name" value="BtuC"/>
    <property type="match status" value="1"/>
</dbReference>
<dbReference type="InterPro" id="IPR037294">
    <property type="entry name" value="ABC_BtuC-like"/>
</dbReference>
<dbReference type="InterPro" id="IPR023691">
    <property type="entry name" value="ABC_transptr_BtuC"/>
</dbReference>
<dbReference type="InterPro" id="IPR000522">
    <property type="entry name" value="ABC_transptr_permease_BtuC"/>
</dbReference>
<dbReference type="NCBIfam" id="NF003001">
    <property type="entry name" value="PRK03784.1"/>
    <property type="match status" value="1"/>
</dbReference>
<dbReference type="PANTHER" id="PTHR30472">
    <property type="entry name" value="FERRIC ENTEROBACTIN TRANSPORT SYSTEM PERMEASE PROTEIN"/>
    <property type="match status" value="1"/>
</dbReference>
<dbReference type="PANTHER" id="PTHR30472:SF29">
    <property type="entry name" value="VITAMIN B12 IMPORT SYSTEM PERMEASE PROTEIN BTUC"/>
    <property type="match status" value="1"/>
</dbReference>
<dbReference type="Pfam" id="PF01032">
    <property type="entry name" value="FecCD"/>
    <property type="match status" value="1"/>
</dbReference>
<dbReference type="SUPFAM" id="SSF81345">
    <property type="entry name" value="ABC transporter involved in vitamin B12 uptake, BtuC"/>
    <property type="match status" value="1"/>
</dbReference>
<organism>
    <name type="scientific">Escherichia coli O157:H7</name>
    <dbReference type="NCBI Taxonomy" id="83334"/>
    <lineage>
        <taxon>Bacteria</taxon>
        <taxon>Pseudomonadati</taxon>
        <taxon>Pseudomonadota</taxon>
        <taxon>Gammaproteobacteria</taxon>
        <taxon>Enterobacterales</taxon>
        <taxon>Enterobacteriaceae</taxon>
        <taxon>Escherichia</taxon>
    </lineage>
</organism>